<sequence>MYDAERGWSLSFAGCGFLGFYHVGATRCLSEHAPHLLRDARMLFGASAGALHCVGVLSGIPLEQTLQVLSDLVRKARSRNIGIFHPSFNLSKFLRQGLCKCLPANVHQLISGKIGISLTRVSDGENVLVSDFRSKDEVVDALVCSCFIPFYSGLIPPSFRGVRYVDGGVSDNVPFIDAKTTITVSPFYGEYDICPKVKSTNFLHVDITKLSLRLCTGNLYLLSRAFVPPDLKVLGEICLRGYLDAFRFLEEKGICNRPQPGLKSSSEGMDPEVAMPSWANMSLDSSPESAALAVRLEGDELLDHLRLSILPWDESILDTLSPRLATALSEEMKDKGGYMSKICNLLPIRIMSYVMLPCTLPVESAIAIVQRLVTWLPDMPDDVLWLQWVTSQVFTRVLMCLLPASRSQMPVSSQQASPCTPEQDWPCWTPCSPKGCPAETKAEATPRSILRSSLNFFLGNKVPAGAEGLSTFPSFSLEKSL</sequence>
<proteinExistence type="evidence at protein level"/>
<comment type="function">
    <text evidence="5 12 13 14">Specifically catalyzes coenzyme A (CoA)-dependent acylation of 1-acyl-sn-glycerol 3-phosphate (2-lysophosphatidic acid/LPA) to generate phosphatidic acid (PA), an important metabolic intermediate and precursor for both triglycerides and glycerophospholipids. Does not esterify other lysophospholipids. Acyl donors are long chain (at least C16) fatty acyl-CoAs: arachidonoyl-CoA, linoleoyl-CoA, oleoyl-CoA and at a lesser extent palmitoyl-CoA (PubMed:22560221). Additionally possesses low triacylglycerol lipase and CoA-independent acylglycerol transacylase activities and thus may play a role in acyl-chain remodeling of triglycerides (PubMed:15364929, PubMed:20034933, PubMed:22560221). In vitro may express hydrolytic activity against glycerolipids triacylglycerol, diacylglycerol and monoacylglycerol, with a strong preference for oleic acid as the acyl moiety (PubMed:21878620). However, the triacylglycerol hydrolase activity is controversial and may be very low (PubMed:22560221). Possesses phospholipase A2 activity (PubMed:15364929).</text>
</comment>
<comment type="catalytic activity">
    <reaction evidence="13 14">
        <text>a 1-acyl-sn-glycero-3-phosphate + an acyl-CoA = a 1,2-diacyl-sn-glycero-3-phosphate + CoA</text>
        <dbReference type="Rhea" id="RHEA:19709"/>
        <dbReference type="ChEBI" id="CHEBI:57287"/>
        <dbReference type="ChEBI" id="CHEBI:57970"/>
        <dbReference type="ChEBI" id="CHEBI:58342"/>
        <dbReference type="ChEBI" id="CHEBI:58608"/>
        <dbReference type="EC" id="2.3.1.51"/>
    </reaction>
</comment>
<comment type="catalytic activity">
    <reaction evidence="5 12 13 14">
        <text>a triacylglycerol + H2O = a diacylglycerol + a fatty acid + H(+)</text>
        <dbReference type="Rhea" id="RHEA:12044"/>
        <dbReference type="ChEBI" id="CHEBI:15377"/>
        <dbReference type="ChEBI" id="CHEBI:15378"/>
        <dbReference type="ChEBI" id="CHEBI:17855"/>
        <dbReference type="ChEBI" id="CHEBI:18035"/>
        <dbReference type="ChEBI" id="CHEBI:28868"/>
        <dbReference type="EC" id="3.1.1.3"/>
    </reaction>
</comment>
<comment type="catalytic activity">
    <reaction evidence="5">
        <text>a 1-acylglycerol + a 1,3-diacylglycerol = a triacylglycerol + glycerol</text>
        <dbReference type="Rhea" id="RHEA:44440"/>
        <dbReference type="ChEBI" id="CHEBI:17754"/>
        <dbReference type="ChEBI" id="CHEBI:17855"/>
        <dbReference type="ChEBI" id="CHEBI:35759"/>
        <dbReference type="ChEBI" id="CHEBI:47777"/>
    </reaction>
</comment>
<comment type="catalytic activity">
    <reaction evidence="5">
        <text>a 1-acylglycerol + a 1,2-diacylglycerol = a triacylglycerol + glycerol</text>
        <dbReference type="Rhea" id="RHEA:44436"/>
        <dbReference type="ChEBI" id="CHEBI:17754"/>
        <dbReference type="ChEBI" id="CHEBI:17855"/>
        <dbReference type="ChEBI" id="CHEBI:35759"/>
        <dbReference type="ChEBI" id="CHEBI:49172"/>
    </reaction>
</comment>
<comment type="catalytic activity">
    <reaction evidence="5">
        <text>2 a 1-acylglycerol = a 1,2-diacylglycerol + glycerol</text>
        <dbReference type="Rhea" id="RHEA:44432"/>
        <dbReference type="ChEBI" id="CHEBI:17754"/>
        <dbReference type="ChEBI" id="CHEBI:35759"/>
        <dbReference type="ChEBI" id="CHEBI:49172"/>
    </reaction>
</comment>
<comment type="catalytic activity">
    <reaction evidence="14">
        <text>1-(9Z-octadecenoyl)-sn-glycero-3-phosphate + (9Z)-octadecenoyl-CoA = 1,2-di-(9Z-octadecenoyl)-sn-glycero-3-phosphate + CoA</text>
        <dbReference type="Rhea" id="RHEA:37131"/>
        <dbReference type="ChEBI" id="CHEBI:57287"/>
        <dbReference type="ChEBI" id="CHEBI:57387"/>
        <dbReference type="ChEBI" id="CHEBI:74544"/>
        <dbReference type="ChEBI" id="CHEBI:74546"/>
    </reaction>
    <physiologicalReaction direction="left-to-right" evidence="22">
        <dbReference type="Rhea" id="RHEA:37132"/>
    </physiologicalReaction>
</comment>
<comment type="catalytic activity">
    <reaction evidence="14">
        <text>1-(9Z-octadecenoyl)-sn-glycero-3-phosphate + hexadecanoyl-CoA = 1-(9Z)-octadecenoyl-2-hexadecanoyl-sn-glycero-3-phosphate + CoA</text>
        <dbReference type="Rhea" id="RHEA:37143"/>
        <dbReference type="ChEBI" id="CHEBI:57287"/>
        <dbReference type="ChEBI" id="CHEBI:57379"/>
        <dbReference type="ChEBI" id="CHEBI:74544"/>
        <dbReference type="ChEBI" id="CHEBI:74551"/>
    </reaction>
    <physiologicalReaction direction="left-to-right" evidence="22">
        <dbReference type="Rhea" id="RHEA:37144"/>
    </physiologicalReaction>
</comment>
<comment type="catalytic activity">
    <reaction evidence="14">
        <text>1-(9Z-octadecenoyl)-sn-glycero-3-phosphate + (9Z,12Z)-octadecadienoyl-CoA = 1-(9Z)-octadecenoyl-2-(9Z,12Z)-octadecadienoyl-sn-glycero-3-phosphate + CoA</text>
        <dbReference type="Rhea" id="RHEA:37159"/>
        <dbReference type="ChEBI" id="CHEBI:57287"/>
        <dbReference type="ChEBI" id="CHEBI:57383"/>
        <dbReference type="ChEBI" id="CHEBI:74544"/>
        <dbReference type="ChEBI" id="CHEBI:74563"/>
    </reaction>
    <physiologicalReaction direction="left-to-right" evidence="22">
        <dbReference type="Rhea" id="RHEA:37160"/>
    </physiologicalReaction>
</comment>
<comment type="catalytic activity">
    <reaction evidence="14">
        <text>1-(9Z-octadecenoyl)-sn-glycero-3-phosphate + (5Z,8Z,11Z,14Z)-eicosatetraenoyl-CoA = 1-(9Z)-octadecenoyl-2-(5Z,8Z,11Z,14Z)-eicosatetraenoyl-sn-glycero-3-phosphate + CoA</text>
        <dbReference type="Rhea" id="RHEA:37443"/>
        <dbReference type="ChEBI" id="CHEBI:57287"/>
        <dbReference type="ChEBI" id="CHEBI:57368"/>
        <dbReference type="ChEBI" id="CHEBI:74544"/>
        <dbReference type="ChEBI" id="CHEBI:74928"/>
    </reaction>
    <physiologicalReaction direction="left-to-right" evidence="22">
        <dbReference type="Rhea" id="RHEA:37444"/>
    </physiologicalReaction>
</comment>
<comment type="catalytic activity">
    <reaction evidence="5">
        <text>2 1-(9Z-octadecenoyl)-glycerol = 1,2-di-(9Z-octadecenoyl)-glycerol + glycerol</text>
        <dbReference type="Rhea" id="RHEA:38323"/>
        <dbReference type="ChEBI" id="CHEBI:17754"/>
        <dbReference type="ChEBI" id="CHEBI:52323"/>
        <dbReference type="ChEBI" id="CHEBI:75342"/>
    </reaction>
    <physiologicalReaction direction="left-to-right" evidence="21">
        <dbReference type="Rhea" id="RHEA:38324"/>
    </physiologicalReaction>
</comment>
<comment type="catalytic activity">
    <reaction evidence="5">
        <text>1-(9Z-octadecenoyl)-glycerol + 1,2-di-(9Z-octadecenoyl)-glycerol = 1,2,3-tri-(9Z-octadecenoyl)-glycerol + glycerol</text>
        <dbReference type="Rhea" id="RHEA:38327"/>
        <dbReference type="ChEBI" id="CHEBI:17754"/>
        <dbReference type="ChEBI" id="CHEBI:52323"/>
        <dbReference type="ChEBI" id="CHEBI:53753"/>
        <dbReference type="ChEBI" id="CHEBI:75342"/>
    </reaction>
    <physiologicalReaction direction="left-to-right" evidence="21">
        <dbReference type="Rhea" id="RHEA:38328"/>
    </physiologicalReaction>
</comment>
<comment type="catalytic activity">
    <reaction evidence="5">
        <text>1-(9Z-octadecenoyl)-glycerol + 1,3-di-(9Z-octadecenoyl)-glycerol = 1,2,3-tri-(9Z-octadecenoyl)-glycerol + glycerol</text>
        <dbReference type="Rhea" id="RHEA:38331"/>
        <dbReference type="ChEBI" id="CHEBI:17754"/>
        <dbReference type="ChEBI" id="CHEBI:53753"/>
        <dbReference type="ChEBI" id="CHEBI:75342"/>
        <dbReference type="ChEBI" id="CHEBI:75735"/>
    </reaction>
    <physiologicalReaction direction="left-to-right" evidence="21">
        <dbReference type="Rhea" id="RHEA:38332"/>
    </physiologicalReaction>
</comment>
<comment type="catalytic activity">
    <reaction evidence="13">
        <text>1,2,3-tri-(9Z-octadecenoyl)-glycerol + H2O = 1,3-di-(9Z-octadecenoyl)-glycerol + (9Z)-octadecenoate + H(+)</text>
        <dbReference type="Rhea" id="RHEA:38387"/>
        <dbReference type="ChEBI" id="CHEBI:15377"/>
        <dbReference type="ChEBI" id="CHEBI:15378"/>
        <dbReference type="ChEBI" id="CHEBI:30823"/>
        <dbReference type="ChEBI" id="CHEBI:53753"/>
        <dbReference type="ChEBI" id="CHEBI:75735"/>
    </reaction>
    <physiologicalReaction direction="left-to-right" evidence="13">
        <dbReference type="Rhea" id="RHEA:38388"/>
    </physiologicalReaction>
</comment>
<comment type="catalytic activity">
    <reaction evidence="5">
        <text>a 1,2-diacyl-sn-glycero-3-phosphocholine + H2O = a 1-acyl-sn-glycero-3-phosphocholine + a fatty acid + H(+)</text>
        <dbReference type="Rhea" id="RHEA:15801"/>
        <dbReference type="ChEBI" id="CHEBI:15377"/>
        <dbReference type="ChEBI" id="CHEBI:15378"/>
        <dbReference type="ChEBI" id="CHEBI:28868"/>
        <dbReference type="ChEBI" id="CHEBI:57643"/>
        <dbReference type="ChEBI" id="CHEBI:58168"/>
        <dbReference type="EC" id="3.1.1.4"/>
    </reaction>
    <physiologicalReaction direction="left-to-right" evidence="21">
        <dbReference type="Rhea" id="RHEA:15802"/>
    </physiologicalReaction>
</comment>
<comment type="activity regulation">
    <text evidence="5">The triglyceride lipase activity is inhibited by BEL ((E)-6-(bromomethylene)-3-(1-naphthalenyl)-2H-tetrahydropyran-2-one), a suicide substrate inhibitor.</text>
</comment>
<comment type="biophysicochemical properties">
    <kinetics>
        <KM evidence="13">32.2 uM for triacylglycerol</KM>
        <KM evidence="13">29.1 uM for diacylglycerol</KM>
        <KM evidence="13">32.9 uM for monoacylglycerol</KM>
        <KM evidence="13">6.2 uM for oleoyl-CoA</KM>
        <Vmax evidence="13">10.5 nmol/min/mg enzyme toward triacylglycerol</Vmax>
        <Vmax evidence="13">21.8 nmol/min/mg enzyme toward diacylglycerol</Vmax>
        <Vmax evidence="13">27.4 nmol/min/mg enzyme toward monoacylglycerol</Vmax>
        <Vmax evidence="13">2.8 nmol/min/mg enzyme toward oleoyl-CoA</Vmax>
    </kinetics>
</comment>
<comment type="pathway">
    <text evidence="14">Phospholipid metabolism.</text>
</comment>
<comment type="pathway">
    <text evidence="5 12 14">Glycerolipid metabolism.</text>
</comment>
<comment type="subcellular location">
    <subcellularLocation>
        <location evidence="5 14">Membrane</location>
        <topology evidence="5">Single-pass type II membrane protein</topology>
    </subcellularLocation>
    <subcellularLocation>
        <location evidence="12 14">Lipid droplet</location>
    </subcellularLocation>
</comment>
<comment type="alternative products">
    <event type="alternative splicing"/>
    <isoform>
        <id>Q9NST1-1</id>
        <name>1</name>
        <sequence type="displayed"/>
    </isoform>
    <isoform>
        <id>Q9NST1-2</id>
        <name>2</name>
        <sequence type="described" ref="VSP_036222"/>
    </isoform>
</comment>
<comment type="induction">
    <text evidence="4">By changes in energy balance: down-regulated following very low-calorie diet, whereas refeeding elevates the mRNA level.</text>
</comment>
<comment type="polymorphism">
    <text evidence="8">Polymorphic variation at position 148 influences insulin secretion levels and obesity. In obese subjects the body mass index and waist are higher in carriers of the Ile-148 allele. The Ile-148 carriers also display decreased insulin secretion in response to oral glucose tolerance test. Met-148 allele carriers are seemingly more insulin resistant at a lower body mass index.</text>
</comment>
<comment type="disease" evidence="9 10 11 15">
    <disease id="DI-02071">
        <name>Non-alcoholic fatty liver disease 1</name>
        <acronym>NAFLD1</acronym>
        <description>A condition characterized by accumulation of triglycerides in the liver. It is associated with adverse metabolic consequences, including insulin resistance and dyslipidemia. In a subset of individuals, hepatic steatosis promotes an inflammatory response in the liver, referred to as steatohepatitis, which can progress to cirrhosis and liver cancer. NAFLD is the most common form of liver disease in Western countries.</description>
        <dbReference type="MIM" id="613282"/>
    </disease>
    <text>Disease susceptibility is associated with variants affecting the gene represented in this entry.</text>
</comment>
<keyword id="KW-0012">Acyltransferase</keyword>
<keyword id="KW-0025">Alternative splicing</keyword>
<keyword id="KW-0225">Disease variant</keyword>
<keyword id="KW-0325">Glycoprotein</keyword>
<keyword id="KW-0378">Hydrolase</keyword>
<keyword id="KW-0444">Lipid biosynthesis</keyword>
<keyword id="KW-0551">Lipid droplet</keyword>
<keyword id="KW-0443">Lipid metabolism</keyword>
<keyword id="KW-0472">Membrane</keyword>
<keyword id="KW-0550">Obesity</keyword>
<keyword id="KW-0594">Phospholipid biosynthesis</keyword>
<keyword id="KW-1208">Phospholipid metabolism</keyword>
<keyword id="KW-1267">Proteomics identification</keyword>
<keyword id="KW-1185">Reference proteome</keyword>
<keyword id="KW-0735">Signal-anchor</keyword>
<keyword id="KW-0808">Transferase</keyword>
<keyword id="KW-0812">Transmembrane</keyword>
<keyword id="KW-1133">Transmembrane helix</keyword>
<organism>
    <name type="scientific">Homo sapiens</name>
    <name type="common">Human</name>
    <dbReference type="NCBI Taxonomy" id="9606"/>
    <lineage>
        <taxon>Eukaryota</taxon>
        <taxon>Metazoa</taxon>
        <taxon>Chordata</taxon>
        <taxon>Craniata</taxon>
        <taxon>Vertebrata</taxon>
        <taxon>Euteleostomi</taxon>
        <taxon>Mammalia</taxon>
        <taxon>Eutheria</taxon>
        <taxon>Euarchontoglires</taxon>
        <taxon>Primates</taxon>
        <taxon>Haplorrhini</taxon>
        <taxon>Catarrhini</taxon>
        <taxon>Hominidae</taxon>
        <taxon>Homo</taxon>
    </lineage>
</organism>
<dbReference type="EC" id="2.3.1.51" evidence="13 14"/>
<dbReference type="EC" id="3.1.1.4" evidence="5"/>
<dbReference type="EC" id="3.1.1.3" evidence="5 12 13 14"/>
<dbReference type="EMBL" id="AL138578">
    <property type="protein sequence ID" value="CAB71238.2"/>
    <property type="molecule type" value="mRNA"/>
</dbReference>
<dbReference type="EMBL" id="CR456476">
    <property type="protein sequence ID" value="CAG30362.1"/>
    <property type="molecule type" value="mRNA"/>
</dbReference>
<dbReference type="EMBL" id="AK123806">
    <property type="protein sequence ID" value="BAG53962.1"/>
    <property type="molecule type" value="mRNA"/>
</dbReference>
<dbReference type="EMBL" id="AK315166">
    <property type="protein sequence ID" value="BAG37610.1"/>
    <property type="molecule type" value="mRNA"/>
</dbReference>
<dbReference type="EMBL" id="AL023654">
    <property type="status" value="NOT_ANNOTATED_CDS"/>
    <property type="molecule type" value="Genomic_DNA"/>
</dbReference>
<dbReference type="EMBL" id="AL035398">
    <property type="status" value="NOT_ANNOTATED_CDS"/>
    <property type="molecule type" value="Genomic_DNA"/>
</dbReference>
<dbReference type="EMBL" id="CH471138">
    <property type="protein sequence ID" value="EAW73324.1"/>
    <property type="molecule type" value="Genomic_DNA"/>
</dbReference>
<dbReference type="EMBL" id="BC014449">
    <property type="protein sequence ID" value="AAH14449.2"/>
    <property type="molecule type" value="mRNA"/>
</dbReference>
<dbReference type="EMBL" id="BC065195">
    <property type="protein sequence ID" value="AAH65195.1"/>
    <property type="molecule type" value="mRNA"/>
</dbReference>
<dbReference type="CCDS" id="CCDS14054.1">
    <molecule id="Q9NST1-1"/>
</dbReference>
<dbReference type="RefSeq" id="NP_079501.2">
    <molecule id="Q9NST1-1"/>
    <property type="nucleotide sequence ID" value="NM_025225.2"/>
</dbReference>
<dbReference type="SMR" id="Q9NST1"/>
<dbReference type="BioGRID" id="123247">
    <property type="interactions" value="8"/>
</dbReference>
<dbReference type="FunCoup" id="Q9NST1">
    <property type="interactions" value="224"/>
</dbReference>
<dbReference type="IntAct" id="Q9NST1">
    <property type="interactions" value="5"/>
</dbReference>
<dbReference type="STRING" id="9606.ENSP00000216180"/>
<dbReference type="SwissLipids" id="SLP:000000282"/>
<dbReference type="GlyCosmos" id="Q9NST1">
    <property type="glycosylation" value="2 sites, No reported glycans"/>
</dbReference>
<dbReference type="GlyGen" id="Q9NST1">
    <property type="glycosylation" value="3 sites, 1 O-linked glycan (1 site)"/>
</dbReference>
<dbReference type="iPTMnet" id="Q9NST1"/>
<dbReference type="PhosphoSitePlus" id="Q9NST1"/>
<dbReference type="BioMuta" id="PNPLA3"/>
<dbReference type="DMDM" id="32469599"/>
<dbReference type="jPOST" id="Q9NST1"/>
<dbReference type="MassIVE" id="Q9NST1"/>
<dbReference type="PaxDb" id="9606-ENSP00000216180"/>
<dbReference type="PeptideAtlas" id="Q9NST1"/>
<dbReference type="ProteomicsDB" id="82577">
    <molecule id="Q9NST1-1"/>
</dbReference>
<dbReference type="ProteomicsDB" id="82578">
    <molecule id="Q9NST1-2"/>
</dbReference>
<dbReference type="Antibodypedia" id="27572">
    <property type="antibodies" value="242 antibodies from 32 providers"/>
</dbReference>
<dbReference type="DNASU" id="80339"/>
<dbReference type="Ensembl" id="ENST00000216180.8">
    <molecule id="Q9NST1-1"/>
    <property type="protein sequence ID" value="ENSP00000216180.3"/>
    <property type="gene ID" value="ENSG00000100344.11"/>
</dbReference>
<dbReference type="Ensembl" id="ENST00000423180.2">
    <molecule id="Q9NST1-2"/>
    <property type="protein sequence ID" value="ENSP00000397987.2"/>
    <property type="gene ID" value="ENSG00000100344.11"/>
</dbReference>
<dbReference type="GeneID" id="80339"/>
<dbReference type="KEGG" id="hsa:80339"/>
<dbReference type="MANE-Select" id="ENST00000216180.8">
    <property type="protein sequence ID" value="ENSP00000216180.3"/>
    <property type="RefSeq nucleotide sequence ID" value="NM_025225.3"/>
    <property type="RefSeq protein sequence ID" value="NP_079501.2"/>
</dbReference>
<dbReference type="UCSC" id="uc003bei.1">
    <molecule id="Q9NST1-1"/>
    <property type="organism name" value="human"/>
</dbReference>
<dbReference type="AGR" id="HGNC:18590"/>
<dbReference type="CTD" id="80339"/>
<dbReference type="DisGeNET" id="80339"/>
<dbReference type="GeneCards" id="PNPLA3"/>
<dbReference type="HGNC" id="HGNC:18590">
    <property type="gene designation" value="PNPLA3"/>
</dbReference>
<dbReference type="HPA" id="ENSG00000100344">
    <property type="expression patterns" value="Tissue enriched (liver)"/>
</dbReference>
<dbReference type="MalaCards" id="PNPLA3"/>
<dbReference type="MIM" id="609567">
    <property type="type" value="gene"/>
</dbReference>
<dbReference type="MIM" id="613282">
    <property type="type" value="phenotype"/>
</dbReference>
<dbReference type="neXtProt" id="NX_Q9NST1"/>
<dbReference type="OpenTargets" id="ENSG00000100344"/>
<dbReference type="PharmGKB" id="PA38592"/>
<dbReference type="VEuPathDB" id="HostDB:ENSG00000100344"/>
<dbReference type="eggNOG" id="KOG3773">
    <property type="taxonomic scope" value="Eukaryota"/>
</dbReference>
<dbReference type="GeneTree" id="ENSGT00940000155662"/>
<dbReference type="HOGENOM" id="CLU_018371_0_1_1"/>
<dbReference type="InParanoid" id="Q9NST1"/>
<dbReference type="OMA" id="VMSYVML"/>
<dbReference type="OrthoDB" id="197155at2759"/>
<dbReference type="PAN-GO" id="Q9NST1">
    <property type="GO annotations" value="6 GO annotations based on evolutionary models"/>
</dbReference>
<dbReference type="PhylomeDB" id="Q9NST1"/>
<dbReference type="TreeFam" id="TF314272"/>
<dbReference type="PathwayCommons" id="Q9NST1"/>
<dbReference type="Reactome" id="R-HSA-1482883">
    <property type="pathway name" value="Acyl chain remodeling of DAG and TAG"/>
</dbReference>
<dbReference type="SignaLink" id="Q9NST1"/>
<dbReference type="BioGRID-ORCS" id="80339">
    <property type="hits" value="8 hits in 1145 CRISPR screens"/>
</dbReference>
<dbReference type="ChiTaRS" id="PNPLA3">
    <property type="organism name" value="human"/>
</dbReference>
<dbReference type="GeneWiki" id="PNPLA3"/>
<dbReference type="GenomeRNAi" id="80339"/>
<dbReference type="Pharos" id="Q9NST1">
    <property type="development level" value="Tbio"/>
</dbReference>
<dbReference type="PRO" id="PR:Q9NST1"/>
<dbReference type="Proteomes" id="UP000005640">
    <property type="component" value="Chromosome 22"/>
</dbReference>
<dbReference type="RNAct" id="Q9NST1">
    <property type="molecule type" value="protein"/>
</dbReference>
<dbReference type="Bgee" id="ENSG00000100344">
    <property type="expression patterns" value="Expressed in pigmented layer of retina and 131 other cell types or tissues"/>
</dbReference>
<dbReference type="ExpressionAtlas" id="Q9NST1">
    <property type="expression patterns" value="baseline and differential"/>
</dbReference>
<dbReference type="GO" id="GO:0005737">
    <property type="term" value="C:cytoplasm"/>
    <property type="evidence" value="ECO:0000318"/>
    <property type="project" value="GO_Central"/>
</dbReference>
<dbReference type="GO" id="GO:0005789">
    <property type="term" value="C:endoplasmic reticulum membrane"/>
    <property type="evidence" value="ECO:0000304"/>
    <property type="project" value="Reactome"/>
</dbReference>
<dbReference type="GO" id="GO:0005811">
    <property type="term" value="C:lipid droplet"/>
    <property type="evidence" value="ECO:0000314"/>
    <property type="project" value="UniProtKB"/>
</dbReference>
<dbReference type="GO" id="GO:0016020">
    <property type="term" value="C:membrane"/>
    <property type="evidence" value="ECO:0000314"/>
    <property type="project" value="BHF-UCL"/>
</dbReference>
<dbReference type="GO" id="GO:0003841">
    <property type="term" value="F:1-acylglycerol-3-phosphate O-acyltransferase activity"/>
    <property type="evidence" value="ECO:0000314"/>
    <property type="project" value="UniProtKB"/>
</dbReference>
<dbReference type="GO" id="GO:0016411">
    <property type="term" value="F:acylglycerol O-acyltransferase activity"/>
    <property type="evidence" value="ECO:0000304"/>
    <property type="project" value="Reactome"/>
</dbReference>
<dbReference type="GO" id="GO:0051265">
    <property type="term" value="F:diolein transacylation activity"/>
    <property type="evidence" value="ECO:0000314"/>
    <property type="project" value="UniProtKB"/>
</dbReference>
<dbReference type="GO" id="GO:0004465">
    <property type="term" value="F:lipoprotein lipase activity"/>
    <property type="evidence" value="ECO:0000304"/>
    <property type="project" value="Reactome"/>
</dbReference>
<dbReference type="GO" id="GO:0036042">
    <property type="term" value="F:long-chain fatty acyl-CoA binding"/>
    <property type="evidence" value="ECO:0000314"/>
    <property type="project" value="BHF-UCL"/>
</dbReference>
<dbReference type="GO" id="GO:0042171">
    <property type="term" value="F:lysophosphatidic acid acyltransferase activity"/>
    <property type="evidence" value="ECO:0000314"/>
    <property type="project" value="BHF-UCL"/>
</dbReference>
<dbReference type="GO" id="GO:0035727">
    <property type="term" value="F:lysophosphatidic acid binding"/>
    <property type="evidence" value="ECO:0000314"/>
    <property type="project" value="BHF-UCL"/>
</dbReference>
<dbReference type="GO" id="GO:0051264">
    <property type="term" value="F:mono-olein transacylation activity"/>
    <property type="evidence" value="ECO:0000314"/>
    <property type="project" value="UniProtKB"/>
</dbReference>
<dbReference type="GO" id="GO:0004623">
    <property type="term" value="F:phospholipase A2 activity"/>
    <property type="evidence" value="ECO:0000314"/>
    <property type="project" value="UniProtKB"/>
</dbReference>
<dbReference type="GO" id="GO:0004806">
    <property type="term" value="F:triacylglycerol lipase activity"/>
    <property type="evidence" value="ECO:0000314"/>
    <property type="project" value="UniProtKB"/>
</dbReference>
<dbReference type="GO" id="GO:0036155">
    <property type="term" value="P:acylglycerol acyl-chain remodeling"/>
    <property type="evidence" value="ECO:0000304"/>
    <property type="project" value="Reactome"/>
</dbReference>
<dbReference type="GO" id="GO:1905243">
    <property type="term" value="P:cellular response to 3,3',5-triiodo-L-thyronine"/>
    <property type="evidence" value="ECO:0007669"/>
    <property type="project" value="Ensembl"/>
</dbReference>
<dbReference type="GO" id="GO:0032869">
    <property type="term" value="P:cellular response to insulin stimulus"/>
    <property type="evidence" value="ECO:0007669"/>
    <property type="project" value="Ensembl"/>
</dbReference>
<dbReference type="GO" id="GO:0006650">
    <property type="term" value="P:glycerophospholipid metabolic process"/>
    <property type="evidence" value="ECO:0000314"/>
    <property type="project" value="BHF-UCL"/>
</dbReference>
<dbReference type="GO" id="GO:0034389">
    <property type="term" value="P:lipid droplet organization"/>
    <property type="evidence" value="ECO:0000315"/>
    <property type="project" value="BHF-UCL"/>
</dbReference>
<dbReference type="GO" id="GO:0055088">
    <property type="term" value="P:lipid homeostasis"/>
    <property type="evidence" value="ECO:0000318"/>
    <property type="project" value="GO_Central"/>
</dbReference>
<dbReference type="GO" id="GO:0001676">
    <property type="term" value="P:long-chain fatty acid metabolic process"/>
    <property type="evidence" value="ECO:0000314"/>
    <property type="project" value="BHF-UCL"/>
</dbReference>
<dbReference type="GO" id="GO:0006654">
    <property type="term" value="P:phosphatidic acid biosynthetic process"/>
    <property type="evidence" value="ECO:0000314"/>
    <property type="project" value="BHF-UCL"/>
</dbReference>
<dbReference type="GO" id="GO:0009744">
    <property type="term" value="P:response to sucrose"/>
    <property type="evidence" value="ECO:0007669"/>
    <property type="project" value="Ensembl"/>
</dbReference>
<dbReference type="GO" id="GO:0036153">
    <property type="term" value="P:triglyceride acyl-chain remodeling"/>
    <property type="evidence" value="ECO:0000314"/>
    <property type="project" value="CACAO"/>
</dbReference>
<dbReference type="GO" id="GO:0019432">
    <property type="term" value="P:triglyceride biosynthetic process"/>
    <property type="evidence" value="ECO:0000314"/>
    <property type="project" value="UniProtKB"/>
</dbReference>
<dbReference type="GO" id="GO:0019433">
    <property type="term" value="P:triglyceride catabolic process"/>
    <property type="evidence" value="ECO:0000314"/>
    <property type="project" value="UniProtKB"/>
</dbReference>
<dbReference type="GO" id="GO:0050872">
    <property type="term" value="P:white fat cell differentiation"/>
    <property type="evidence" value="ECO:0007669"/>
    <property type="project" value="Ensembl"/>
</dbReference>
<dbReference type="CDD" id="cd07221">
    <property type="entry name" value="Pat_PNPLA3"/>
    <property type="match status" value="1"/>
</dbReference>
<dbReference type="FunFam" id="3.40.1090.10:FF:000042">
    <property type="entry name" value="Patatin-like phospholipase domain-containing 3"/>
    <property type="match status" value="1"/>
</dbReference>
<dbReference type="FunFam" id="3.40.1090.10:FF:000003">
    <property type="entry name" value="Patatin-like phospholipase domain-containing protein 2"/>
    <property type="match status" value="1"/>
</dbReference>
<dbReference type="Gene3D" id="3.40.1090.10">
    <property type="entry name" value="Cytosolic phospholipase A2 catalytic domain"/>
    <property type="match status" value="2"/>
</dbReference>
<dbReference type="InterPro" id="IPR016035">
    <property type="entry name" value="Acyl_Trfase/lysoPLipase"/>
</dbReference>
<dbReference type="InterPro" id="IPR039185">
    <property type="entry name" value="Pat_PNPLA3"/>
</dbReference>
<dbReference type="InterPro" id="IPR033562">
    <property type="entry name" value="PLPL"/>
</dbReference>
<dbReference type="InterPro" id="IPR002641">
    <property type="entry name" value="PNPLA_dom"/>
</dbReference>
<dbReference type="PANTHER" id="PTHR12406:SF22">
    <property type="entry name" value="1-ACYLGLYCEROL-3-PHOSPHATE O-ACYLTRANSFERASE PNPLA3"/>
    <property type="match status" value="1"/>
</dbReference>
<dbReference type="PANTHER" id="PTHR12406">
    <property type="entry name" value="CALCIUM-INDEPENDENT PHOSPHOLIPASE A2 IPLA2 -RELATED"/>
    <property type="match status" value="1"/>
</dbReference>
<dbReference type="Pfam" id="PF01734">
    <property type="entry name" value="Patatin"/>
    <property type="match status" value="1"/>
</dbReference>
<dbReference type="SUPFAM" id="SSF52151">
    <property type="entry name" value="FabD/lysophospholipase-like"/>
    <property type="match status" value="1"/>
</dbReference>
<dbReference type="PROSITE" id="PS51635">
    <property type="entry name" value="PNPLA"/>
    <property type="match status" value="1"/>
</dbReference>
<name>PLPL3_HUMAN</name>
<feature type="chain" id="PRO_0000064458" description="1-acylglycerol-3-phosphate O-acyltransferase PNPLA3">
    <location>
        <begin position="1"/>
        <end position="481"/>
    </location>
</feature>
<feature type="topological domain" description="Cytoplasmic" evidence="1">
    <location>
        <begin position="1"/>
        <end position="41"/>
    </location>
</feature>
<feature type="transmembrane region" description="Helical; Signal-anchor for type II membrane protein" evidence="1">
    <location>
        <begin position="42"/>
        <end position="62"/>
    </location>
</feature>
<feature type="topological domain" description="Lumenal" evidence="1">
    <location>
        <begin position="63"/>
        <end position="481"/>
    </location>
</feature>
<feature type="domain" description="PNPLA" evidence="2">
    <location>
        <begin position="10"/>
        <end position="179"/>
    </location>
</feature>
<feature type="short sequence motif" description="GXGXXG" evidence="2">
    <location>
        <begin position="14"/>
        <end position="19"/>
    </location>
</feature>
<feature type="short sequence motif" description="GXSXG" evidence="2">
    <location>
        <begin position="45"/>
        <end position="49"/>
    </location>
</feature>
<feature type="short sequence motif" description="DGA/G" evidence="2">
    <location>
        <begin position="166"/>
        <end position="168"/>
    </location>
</feature>
<feature type="active site" description="Nucleophile" evidence="2">
    <location>
        <position position="47"/>
    </location>
</feature>
<feature type="active site" description="Proton acceptor" evidence="2">
    <location>
        <position position="166"/>
    </location>
</feature>
<feature type="glycosylation site" description="N-linked (GlcNAc...) asparagine" evidence="1">
    <location>
        <position position="89"/>
    </location>
</feature>
<feature type="glycosylation site" description="N-linked (GlcNAc...) asparagine" evidence="1">
    <location>
        <position position="280"/>
    </location>
</feature>
<feature type="splice variant" id="VSP_036222" description="In isoform 2." evidence="17">
    <location>
        <begin position="59"/>
        <end position="62"/>
    </location>
</feature>
<feature type="sequence variant" id="VAR_077543" description="In NAFLD1; uncertain significance; dbSNP:rs746140741." evidence="15">
    <original>A</original>
    <variation>T</variation>
    <location>
        <position position="76"/>
    </location>
</feature>
<feature type="sequence variant" id="VAR_015845" description="In dbSNP:rs2076213." evidence="7">
    <original>C</original>
    <variation>G</variation>
    <location>
        <position position="99"/>
    </location>
</feature>
<feature type="sequence variant" id="VAR_077544" description="In NAFLD1; uncertain significance; dbSNP:rs2049927926." evidence="15">
    <original>A</original>
    <variation>V</variation>
    <location>
        <position position="104"/>
    </location>
</feature>
<feature type="sequence variant" id="VAR_015846" description="In dbSNP:rs2076212." evidence="3">
    <original>G</original>
    <variation>C</variation>
    <location>
        <position position="115"/>
    </location>
</feature>
<feature type="sequence variant" id="VAR_019961" description="Associated with increased hepatic fat content and serum aspartate aminotransferase concentrations; probable gain-of-function variant; 2-fold increase in 1-acylglycerol-3-phosphate O-acyltransferase/lysophosphatidic acid acyltransferase activity; results on glycerolipid hydrolysis activity are controversial with reduction in triacylglycerol, diacylglycerol and monoacylglycerol hydrolase activity or no effect compared to wild-type in which this activity may be very low; does not affect subcellular location, nor association with lipid droplets; dbSNP:rs738409." evidence="3 7 8 9 10 11 12 13 14">
    <original>I</original>
    <variation>M</variation>
    <location>
        <position position="148"/>
    </location>
</feature>
<feature type="sequence variant" id="VAR_077545" description="In NAFLD1; uncertain significance; dbSNP:rs190477302." evidence="15">
    <original>T</original>
    <variation>M</variation>
    <location>
        <position position="200"/>
    </location>
</feature>
<feature type="sequence variant" id="VAR_053814" description="In dbSNP:rs35726887.">
    <original>T</original>
    <variation>P</variation>
    <location>
        <position position="216"/>
    </location>
</feature>
<feature type="sequence variant" id="VAR_015847" description="In dbSNP:rs2294918." evidence="3 6 7 16">
    <original>K</original>
    <variation>E</variation>
    <location>
        <position position="434"/>
    </location>
</feature>
<feature type="sequence variant" id="VAR_053815" description="Associated with lower hepatic fat content in African Americans; dbSNP:rs6006460." evidence="9">
    <original>S</original>
    <variation>I</variation>
    <location>
        <position position="453"/>
    </location>
</feature>
<feature type="mutagenesis site" description="65% loss of 1-acylglycerol-3-phosphate O-acyltransferase catalytic activity." evidence="14">
    <original>C</original>
    <variation>S</variation>
    <location>
        <position position="15"/>
    </location>
</feature>
<feature type="mutagenesis site" description="No effect on 1-acylglycerol-3-phosphate O-acyltransferase catalytic activity. Almost completely abolishes triacylglycerol, diacylglycerol and monoacylglycerol hydrolase activity." evidence="13 14">
    <original>S</original>
    <variation>A</variation>
    <location>
        <position position="47"/>
    </location>
</feature>
<feature type="mutagenesis site" description="No effect on 1-acylglycerol-3-phosphate O-acyltransferase catalytic activity." evidence="14">
    <original>D</original>
    <variation>A</variation>
    <location>
        <position position="206"/>
    </location>
</feature>
<feature type="mutagenesis site" description="67% loss of 1-acylglycerol-3-phosphate O-acyltransferase catalytic activity." evidence="14">
    <original>P</original>
    <variation>G</variation>
    <location>
        <position position="311"/>
    </location>
</feature>
<reference key="1">
    <citation type="journal article" date="2003" name="Genome Res.">
        <title>Reevaluating human gene annotation: a second-generation analysis of chromosome 22.</title>
        <authorList>
            <person name="Collins J.E."/>
            <person name="Goward M.E."/>
            <person name="Cole C.G."/>
            <person name="Smink L.J."/>
            <person name="Huckle E.J."/>
            <person name="Knowles S."/>
            <person name="Bye J.M."/>
            <person name="Beare D.M."/>
            <person name="Dunham I."/>
        </authorList>
    </citation>
    <scope>NUCLEOTIDE SEQUENCE [LARGE SCALE MRNA] (ISOFORM 1)</scope>
</reference>
<reference key="2">
    <citation type="journal article" date="2004" name="Genome Biol.">
        <title>A genome annotation-driven approach to cloning the human ORFeome.</title>
        <authorList>
            <person name="Collins J.E."/>
            <person name="Wright C.L."/>
            <person name="Edwards C.A."/>
            <person name="Davis M.P."/>
            <person name="Grinham J.A."/>
            <person name="Cole C.G."/>
            <person name="Goward M.E."/>
            <person name="Aguado B."/>
            <person name="Mallya M."/>
            <person name="Mokrab Y."/>
            <person name="Huckle E.J."/>
            <person name="Beare D.M."/>
            <person name="Dunham I."/>
        </authorList>
    </citation>
    <scope>NUCLEOTIDE SEQUENCE [LARGE SCALE MRNA] (ISOFORM 1)</scope>
    <scope>VARIANT GLU-434</scope>
</reference>
<reference key="3">
    <citation type="journal article" date="2004" name="Nat. Genet.">
        <title>Complete sequencing and characterization of 21,243 full-length human cDNAs.</title>
        <authorList>
            <person name="Ota T."/>
            <person name="Suzuki Y."/>
            <person name="Nishikawa T."/>
            <person name="Otsuki T."/>
            <person name="Sugiyama T."/>
            <person name="Irie R."/>
            <person name="Wakamatsu A."/>
            <person name="Hayashi K."/>
            <person name="Sato H."/>
            <person name="Nagai K."/>
            <person name="Kimura K."/>
            <person name="Makita H."/>
            <person name="Sekine M."/>
            <person name="Obayashi M."/>
            <person name="Nishi T."/>
            <person name="Shibahara T."/>
            <person name="Tanaka T."/>
            <person name="Ishii S."/>
            <person name="Yamamoto J."/>
            <person name="Saito K."/>
            <person name="Kawai Y."/>
            <person name="Isono Y."/>
            <person name="Nakamura Y."/>
            <person name="Nagahari K."/>
            <person name="Murakami K."/>
            <person name="Yasuda T."/>
            <person name="Iwayanagi T."/>
            <person name="Wagatsuma M."/>
            <person name="Shiratori A."/>
            <person name="Sudo H."/>
            <person name="Hosoiri T."/>
            <person name="Kaku Y."/>
            <person name="Kodaira H."/>
            <person name="Kondo H."/>
            <person name="Sugawara M."/>
            <person name="Takahashi M."/>
            <person name="Kanda K."/>
            <person name="Yokoi T."/>
            <person name="Furuya T."/>
            <person name="Kikkawa E."/>
            <person name="Omura Y."/>
            <person name="Abe K."/>
            <person name="Kamihara K."/>
            <person name="Katsuta N."/>
            <person name="Sato K."/>
            <person name="Tanikawa M."/>
            <person name="Yamazaki M."/>
            <person name="Ninomiya K."/>
            <person name="Ishibashi T."/>
            <person name="Yamashita H."/>
            <person name="Murakawa K."/>
            <person name="Fujimori K."/>
            <person name="Tanai H."/>
            <person name="Kimata M."/>
            <person name="Watanabe M."/>
            <person name="Hiraoka S."/>
            <person name="Chiba Y."/>
            <person name="Ishida S."/>
            <person name="Ono Y."/>
            <person name="Takiguchi S."/>
            <person name="Watanabe S."/>
            <person name="Yosida M."/>
            <person name="Hotuta T."/>
            <person name="Kusano J."/>
            <person name="Kanehori K."/>
            <person name="Takahashi-Fujii A."/>
            <person name="Hara H."/>
            <person name="Tanase T.-O."/>
            <person name="Nomura Y."/>
            <person name="Togiya S."/>
            <person name="Komai F."/>
            <person name="Hara R."/>
            <person name="Takeuchi K."/>
            <person name="Arita M."/>
            <person name="Imose N."/>
            <person name="Musashino K."/>
            <person name="Yuuki H."/>
            <person name="Oshima A."/>
            <person name="Sasaki N."/>
            <person name="Aotsuka S."/>
            <person name="Yoshikawa Y."/>
            <person name="Matsunawa H."/>
            <person name="Ichihara T."/>
            <person name="Shiohata N."/>
            <person name="Sano S."/>
            <person name="Moriya S."/>
            <person name="Momiyama H."/>
            <person name="Satoh N."/>
            <person name="Takami S."/>
            <person name="Terashima Y."/>
            <person name="Suzuki O."/>
            <person name="Nakagawa S."/>
            <person name="Senoh A."/>
            <person name="Mizoguchi H."/>
            <person name="Goto Y."/>
            <person name="Shimizu F."/>
            <person name="Wakebe H."/>
            <person name="Hishigaki H."/>
            <person name="Watanabe T."/>
            <person name="Sugiyama A."/>
            <person name="Takemoto M."/>
            <person name="Kawakami B."/>
            <person name="Yamazaki M."/>
            <person name="Watanabe K."/>
            <person name="Kumagai A."/>
            <person name="Itakura S."/>
            <person name="Fukuzumi Y."/>
            <person name="Fujimori Y."/>
            <person name="Komiyama M."/>
            <person name="Tashiro H."/>
            <person name="Tanigami A."/>
            <person name="Fujiwara T."/>
            <person name="Ono T."/>
            <person name="Yamada K."/>
            <person name="Fujii Y."/>
            <person name="Ozaki K."/>
            <person name="Hirao M."/>
            <person name="Ohmori Y."/>
            <person name="Kawabata A."/>
            <person name="Hikiji T."/>
            <person name="Kobatake N."/>
            <person name="Inagaki H."/>
            <person name="Ikema Y."/>
            <person name="Okamoto S."/>
            <person name="Okitani R."/>
            <person name="Kawakami T."/>
            <person name="Noguchi S."/>
            <person name="Itoh T."/>
            <person name="Shigeta K."/>
            <person name="Senba T."/>
            <person name="Matsumura K."/>
            <person name="Nakajima Y."/>
            <person name="Mizuno T."/>
            <person name="Morinaga M."/>
            <person name="Sasaki M."/>
            <person name="Togashi T."/>
            <person name="Oyama M."/>
            <person name="Hata H."/>
            <person name="Watanabe M."/>
            <person name="Komatsu T."/>
            <person name="Mizushima-Sugano J."/>
            <person name="Satoh T."/>
            <person name="Shirai Y."/>
            <person name="Takahashi Y."/>
            <person name="Nakagawa K."/>
            <person name="Okumura K."/>
            <person name="Nagase T."/>
            <person name="Nomura N."/>
            <person name="Kikuchi H."/>
            <person name="Masuho Y."/>
            <person name="Yamashita R."/>
            <person name="Nakai K."/>
            <person name="Yada T."/>
            <person name="Nakamura Y."/>
            <person name="Ohara O."/>
            <person name="Isogai T."/>
            <person name="Sugano S."/>
        </authorList>
    </citation>
    <scope>NUCLEOTIDE SEQUENCE [LARGE SCALE MRNA] (ISOFORMS 1 AND 2)</scope>
    <scope>VARIANTS CYS-115; MET-148 AND GLU-434</scope>
    <source>
        <tissue>Brain</tissue>
        <tissue>Teratocarcinoma</tissue>
    </source>
</reference>
<reference key="4">
    <citation type="journal article" date="1999" name="Nature">
        <title>The DNA sequence of human chromosome 22.</title>
        <authorList>
            <person name="Dunham I."/>
            <person name="Hunt A.R."/>
            <person name="Collins J.E."/>
            <person name="Bruskiewich R."/>
            <person name="Beare D.M."/>
            <person name="Clamp M."/>
            <person name="Smink L.J."/>
            <person name="Ainscough R."/>
            <person name="Almeida J.P."/>
            <person name="Babbage A.K."/>
            <person name="Bagguley C."/>
            <person name="Bailey J."/>
            <person name="Barlow K.F."/>
            <person name="Bates K.N."/>
            <person name="Beasley O.P."/>
            <person name="Bird C.P."/>
            <person name="Blakey S.E."/>
            <person name="Bridgeman A.M."/>
            <person name="Buck D."/>
            <person name="Burgess J."/>
            <person name="Burrill W.D."/>
            <person name="Burton J."/>
            <person name="Carder C."/>
            <person name="Carter N.P."/>
            <person name="Chen Y."/>
            <person name="Clark G."/>
            <person name="Clegg S.M."/>
            <person name="Cobley V.E."/>
            <person name="Cole C.G."/>
            <person name="Collier R.E."/>
            <person name="Connor R."/>
            <person name="Conroy D."/>
            <person name="Corby N.R."/>
            <person name="Coville G.J."/>
            <person name="Cox A.V."/>
            <person name="Davis J."/>
            <person name="Dawson E."/>
            <person name="Dhami P.D."/>
            <person name="Dockree C."/>
            <person name="Dodsworth S.J."/>
            <person name="Durbin R.M."/>
            <person name="Ellington A.G."/>
            <person name="Evans K.L."/>
            <person name="Fey J.M."/>
            <person name="Fleming K."/>
            <person name="French L."/>
            <person name="Garner A.A."/>
            <person name="Gilbert J.G.R."/>
            <person name="Goward M.E."/>
            <person name="Grafham D.V."/>
            <person name="Griffiths M.N.D."/>
            <person name="Hall C."/>
            <person name="Hall R.E."/>
            <person name="Hall-Tamlyn G."/>
            <person name="Heathcott R.W."/>
            <person name="Ho S."/>
            <person name="Holmes S."/>
            <person name="Hunt S.E."/>
            <person name="Jones M.C."/>
            <person name="Kershaw J."/>
            <person name="Kimberley A.M."/>
            <person name="King A."/>
            <person name="Laird G.K."/>
            <person name="Langford C.F."/>
            <person name="Leversha M.A."/>
            <person name="Lloyd C."/>
            <person name="Lloyd D.M."/>
            <person name="Martyn I.D."/>
            <person name="Mashreghi-Mohammadi M."/>
            <person name="Matthews L.H."/>
            <person name="Mccann O.T."/>
            <person name="Mcclay J."/>
            <person name="Mclaren S."/>
            <person name="McMurray A.A."/>
            <person name="Milne S.A."/>
            <person name="Mortimore B.J."/>
            <person name="Odell C.N."/>
            <person name="Pavitt R."/>
            <person name="Pearce A.V."/>
            <person name="Pearson D."/>
            <person name="Phillimore B.J.C.T."/>
            <person name="Phillips S.H."/>
            <person name="Plumb R.W."/>
            <person name="Ramsay H."/>
            <person name="Ramsey Y."/>
            <person name="Rogers L."/>
            <person name="Ross M.T."/>
            <person name="Scott C.E."/>
            <person name="Sehra H.K."/>
            <person name="Skuce C.D."/>
            <person name="Smalley S."/>
            <person name="Smith M.L."/>
            <person name="Soderlund C."/>
            <person name="Spragon L."/>
            <person name="Steward C.A."/>
            <person name="Sulston J.E."/>
            <person name="Swann R.M."/>
            <person name="Vaudin M."/>
            <person name="Wall M."/>
            <person name="Wallis J.M."/>
            <person name="Whiteley M.N."/>
            <person name="Willey D.L."/>
            <person name="Williams L."/>
            <person name="Williams S.A."/>
            <person name="Williamson H."/>
            <person name="Wilmer T.E."/>
            <person name="Wilming L."/>
            <person name="Wright C.L."/>
            <person name="Hubbard T."/>
            <person name="Bentley D.R."/>
            <person name="Beck S."/>
            <person name="Rogers J."/>
            <person name="Shimizu N."/>
            <person name="Minoshima S."/>
            <person name="Kawasaki K."/>
            <person name="Sasaki T."/>
            <person name="Asakawa S."/>
            <person name="Kudoh J."/>
            <person name="Shintani A."/>
            <person name="Shibuya K."/>
            <person name="Yoshizaki Y."/>
            <person name="Aoki N."/>
            <person name="Mitsuyama S."/>
            <person name="Roe B.A."/>
            <person name="Chen F."/>
            <person name="Chu L."/>
            <person name="Crabtree J."/>
            <person name="Deschamps S."/>
            <person name="Do A."/>
            <person name="Do T."/>
            <person name="Dorman A."/>
            <person name="Fang F."/>
            <person name="Fu Y."/>
            <person name="Hu P."/>
            <person name="Hua A."/>
            <person name="Kenton S."/>
            <person name="Lai H."/>
            <person name="Lao H.I."/>
            <person name="Lewis J."/>
            <person name="Lewis S."/>
            <person name="Lin S.-P."/>
            <person name="Loh P."/>
            <person name="Malaj E."/>
            <person name="Nguyen T."/>
            <person name="Pan H."/>
            <person name="Phan S."/>
            <person name="Qi S."/>
            <person name="Qian Y."/>
            <person name="Ray L."/>
            <person name="Ren Q."/>
            <person name="Shaull S."/>
            <person name="Sloan D."/>
            <person name="Song L."/>
            <person name="Wang Q."/>
            <person name="Wang Y."/>
            <person name="Wang Z."/>
            <person name="White J."/>
            <person name="Willingham D."/>
            <person name="Wu H."/>
            <person name="Yao Z."/>
            <person name="Zhan M."/>
            <person name="Zhang G."/>
            <person name="Chissoe S."/>
            <person name="Murray J."/>
            <person name="Miller N."/>
            <person name="Minx P."/>
            <person name="Fulton R."/>
            <person name="Johnson D."/>
            <person name="Bemis G."/>
            <person name="Bentley D."/>
            <person name="Bradshaw H."/>
            <person name="Bourne S."/>
            <person name="Cordes M."/>
            <person name="Du Z."/>
            <person name="Fulton L."/>
            <person name="Goela D."/>
            <person name="Graves T."/>
            <person name="Hawkins J."/>
            <person name="Hinds K."/>
            <person name="Kemp K."/>
            <person name="Latreille P."/>
            <person name="Layman D."/>
            <person name="Ozersky P."/>
            <person name="Rohlfing T."/>
            <person name="Scheet P."/>
            <person name="Walker C."/>
            <person name="Wamsley A."/>
            <person name="Wohldmann P."/>
            <person name="Pepin K."/>
            <person name="Nelson J."/>
            <person name="Korf I."/>
            <person name="Bedell J.A."/>
            <person name="Hillier L.W."/>
            <person name="Mardis E."/>
            <person name="Waterston R."/>
            <person name="Wilson R."/>
            <person name="Emanuel B.S."/>
            <person name="Shaikh T."/>
            <person name="Kurahashi H."/>
            <person name="Saitta S."/>
            <person name="Budarf M.L."/>
            <person name="McDermid H.E."/>
            <person name="Johnson A."/>
            <person name="Wong A.C.C."/>
            <person name="Morrow B.E."/>
            <person name="Edelmann L."/>
            <person name="Kim U.J."/>
            <person name="Shizuya H."/>
            <person name="Simon M.I."/>
            <person name="Dumanski J.P."/>
            <person name="Peyrard M."/>
            <person name="Kedra D."/>
            <person name="Seroussi E."/>
            <person name="Fransson I."/>
            <person name="Tapia I."/>
            <person name="Bruder C.E."/>
            <person name="O'Brien K.P."/>
            <person name="Wilkinson P."/>
            <person name="Bodenteich A."/>
            <person name="Hartman K."/>
            <person name="Hu X."/>
            <person name="Khan A.S."/>
            <person name="Lane L."/>
            <person name="Tilahun Y."/>
            <person name="Wright H."/>
        </authorList>
    </citation>
    <scope>NUCLEOTIDE SEQUENCE [LARGE SCALE GENOMIC DNA]</scope>
</reference>
<reference key="5">
    <citation type="submission" date="2005-07" db="EMBL/GenBank/DDBJ databases">
        <authorList>
            <person name="Mural R.J."/>
            <person name="Istrail S."/>
            <person name="Sutton G.G."/>
            <person name="Florea L."/>
            <person name="Halpern A.L."/>
            <person name="Mobarry C.M."/>
            <person name="Lippert R."/>
            <person name="Walenz B."/>
            <person name="Shatkay H."/>
            <person name="Dew I."/>
            <person name="Miller J.R."/>
            <person name="Flanigan M.J."/>
            <person name="Edwards N.J."/>
            <person name="Bolanos R."/>
            <person name="Fasulo D."/>
            <person name="Halldorsson B.V."/>
            <person name="Hannenhalli S."/>
            <person name="Turner R."/>
            <person name="Yooseph S."/>
            <person name="Lu F."/>
            <person name="Nusskern D.R."/>
            <person name="Shue B.C."/>
            <person name="Zheng X.H."/>
            <person name="Zhong F."/>
            <person name="Delcher A.L."/>
            <person name="Huson D.H."/>
            <person name="Kravitz S.A."/>
            <person name="Mouchard L."/>
            <person name="Reinert K."/>
            <person name="Remington K.A."/>
            <person name="Clark A.G."/>
            <person name="Waterman M.S."/>
            <person name="Eichler E.E."/>
            <person name="Adams M.D."/>
            <person name="Hunkapiller M.W."/>
            <person name="Myers E.W."/>
            <person name="Venter J.C."/>
        </authorList>
    </citation>
    <scope>NUCLEOTIDE SEQUENCE [LARGE SCALE GENOMIC DNA]</scope>
    <scope>VARIANT GLU-434</scope>
</reference>
<reference key="6">
    <citation type="journal article" date="2004" name="Genome Res.">
        <title>The status, quality, and expansion of the NIH full-length cDNA project: the Mammalian Gene Collection (MGC).</title>
        <authorList>
            <consortium name="The MGC Project Team"/>
        </authorList>
    </citation>
    <scope>NUCLEOTIDE SEQUENCE [LARGE SCALE MRNA] (ISOFORM 1)</scope>
    <scope>VARIANTS GLY-99; MET-148 AND GLU-434</scope>
    <source>
        <tissue>Brain</tissue>
        <tissue>Skin</tissue>
    </source>
</reference>
<reference key="7">
    <citation type="journal article" date="2004" name="J. Biol. Chem.">
        <title>Identification, cloning, expression, and purification of three novel human calcium-independent phospholipase A2 family members possessing triacylglycerol lipase and acylglycerol transacylase activities.</title>
        <authorList>
            <person name="Jenkins C.M."/>
            <person name="Mancuso D.J."/>
            <person name="Yan W."/>
            <person name="Sims H.F."/>
            <person name="Gibson B."/>
            <person name="Gross R.W."/>
        </authorList>
    </citation>
    <scope>FUNCTION</scope>
    <scope>PATHWAY</scope>
    <scope>SUBCELLULAR LOCATION</scope>
    <scope>CATALYTIC ACTIVITY</scope>
    <scope>ACTIVITY REGULATION</scope>
</reference>
<reference key="8">
    <citation type="journal article" date="2004" name="J. Clin. Endocrinol. Metab.">
        <title>Adiponutrin: A new gene regulated by energy balance in human adipose tissue.</title>
        <authorList>
            <person name="Liu Y.-M."/>
            <person name="Moldes M."/>
            <person name="Bastard J.-P."/>
            <person name="Bruckert E."/>
            <person name="Viguerie N."/>
            <person name="Hainque B."/>
            <person name="Basdevant A."/>
            <person name="Langin D."/>
            <person name="Pairault J."/>
            <person name="Clement K."/>
        </authorList>
    </citation>
    <scope>INDUCTION</scope>
</reference>
<reference key="9">
    <citation type="journal article" date="2008" name="Eur. J. Endocrinol.">
        <title>Polymorphisms in the adiponutrin gene are associated with increased insulin secretion and obesity.</title>
        <authorList>
            <person name="Johansson L.E."/>
            <person name="Lindblad U."/>
            <person name="Larsson C.A."/>
            <person name="Raastam L."/>
            <person name="Ridderstraale M."/>
        </authorList>
    </citation>
    <scope>VARIANT MET-148</scope>
    <scope>POLYMORPHISM</scope>
</reference>
<reference key="10">
    <citation type="journal article" date="2008" name="Nat. Genet.">
        <title>Genetic variation in PNPLA3 confers susceptibility to nonalcoholic fatty liver disease.</title>
        <authorList>
            <person name="Romeo S."/>
            <person name="Kozlitina J."/>
            <person name="Xing C."/>
            <person name="Pertsemlidis A."/>
            <person name="Cox D."/>
            <person name="Pennacchio L.A."/>
            <person name="Boerwinkle E."/>
            <person name="Cohen J.C."/>
            <person name="Hobbs H.H."/>
        </authorList>
    </citation>
    <scope>VARIANTS MET-148 AND ILE-453</scope>
    <scope>INVOLVEMENT IN SUSCEPTIBILITY TO NAFLD1</scope>
</reference>
<reference key="11">
    <citation type="journal article" date="2009" name="Diabetologia">
        <title>A common variant in PNPLA3, which encodes adiponutrin, is associated with liver fat content in humans.</title>
        <authorList>
            <person name="Kotronen A."/>
            <person name="Johansson L.E."/>
            <person name="Johansson L.M."/>
            <person name="Roos C."/>
            <person name="Westerbacka J."/>
            <person name="Hamsten A."/>
            <person name="Bergholm R."/>
            <person name="Arkkila P."/>
            <person name="Arola J."/>
            <person name="Kiviluoto T."/>
            <person name="Fisher R.M."/>
            <person name="Ehrenborg E."/>
            <person name="Orho-Melander M."/>
            <person name="Ridderstrale M."/>
            <person name="Groop L."/>
            <person name="Yki-Jarvinen H."/>
        </authorList>
    </citation>
    <scope>VARIANT MET-148</scope>
    <scope>INVOLVEMENT IN SUSCEPTIBILITY TO NAFLD1</scope>
</reference>
<reference key="12">
    <citation type="journal article" date="2009" name="J. Lipid Res.">
        <title>A nonsynonymous gene variant in the adiponutrin gene is associated with nonalcoholic fatty liver disease severity.</title>
        <authorList>
            <person name="Sookoian S."/>
            <person name="Castano G.O."/>
            <person name="Burgueno A.L."/>
            <person name="Gianotti T.F."/>
            <person name="Rosselli M.S."/>
            <person name="Pirola C.J."/>
        </authorList>
    </citation>
    <scope>VARIANT MET-148</scope>
    <scope>INVOLVEMENT IN SUSCEPTIBILITY TO NAFLD1</scope>
</reference>
<reference key="13">
    <citation type="journal article" date="2010" name="J. Biol. Chem.">
        <title>A sequence variation (I148M) in PNPLA3 associated with nonalcoholic fatty liver disease disrupts triglyceride hydrolysis.</title>
        <authorList>
            <person name="He S."/>
            <person name="McPhaul C."/>
            <person name="Li J.Z."/>
            <person name="Garuti R."/>
            <person name="Kinch L."/>
            <person name="Grishin N.V."/>
            <person name="Cohen J.C."/>
            <person name="Hobbs H.H."/>
        </authorList>
    </citation>
    <scope>CATALYTIC ACTIVITY</scope>
    <scope>FUNCTION</scope>
    <scope>SUBCELLULAR LOCATION</scope>
    <scope>PATHWAY</scope>
    <scope>CHARACTERIZATION OF VARIANT MET-148</scope>
</reference>
<reference key="14">
    <citation type="journal article" date="2011" name="J. Biol. Chem.">
        <title>Expression and characterization of a PNPLA3 protein isoform (I148M) associated with nonalcoholic fatty liver disease.</title>
        <authorList>
            <person name="Huang Y."/>
            <person name="Cohen J.C."/>
            <person name="Hobbs H.H."/>
        </authorList>
    </citation>
    <scope>CHARACTERIZATION OF VARIANT MET-148</scope>
    <scope>INVOLVEMENT IN SUSCEPTIBILITY TO NAFLD1</scope>
    <scope>CATALYTIC ACTIVITY</scope>
    <scope>FUNCTION</scope>
    <scope>BIOPHYSICOCHEMICAL PROPERTIES</scope>
    <scope>MUTAGENESIS OF SER-47</scope>
</reference>
<reference key="15">
    <citation type="journal article" date="2012" name="Cell Metab.">
        <title>Adiponutrin functions as a nutritionally regulated lysophosphatidic acid acyltransferase.</title>
        <authorList>
            <person name="Kumari M."/>
            <person name="Schoiswohl G."/>
            <person name="Chitraju C."/>
            <person name="Paar M."/>
            <person name="Cornaciu I."/>
            <person name="Rangrez A.Y."/>
            <person name="Wongsiriroj N."/>
            <person name="Nagy H.M."/>
            <person name="Ivanova P.T."/>
            <person name="Scott S.A."/>
            <person name="Knittelfelder O."/>
            <person name="Rechberger G.N."/>
            <person name="Birner-Gruenberger R."/>
            <person name="Eder S."/>
            <person name="Brown H.A."/>
            <person name="Haemmerle G."/>
            <person name="Oberer M."/>
            <person name="Lass A."/>
            <person name="Kershaw E.E."/>
            <person name="Zimmermann R."/>
            <person name="Zechner R."/>
        </authorList>
    </citation>
    <scope>FUNCTION</scope>
    <scope>CATALYTIC ACTIVITY</scope>
    <scope>CHARACTERIZATION OF VARIANT MET-148</scope>
    <scope>MUTAGENESIS OF CYS-15; SER-47; ASP-206 AND PRO-311</scope>
    <scope>PATHWAY</scope>
    <scope>SUBCELLULAR LOCATION</scope>
</reference>
<reference key="16">
    <citation type="journal article" date="2016" name="Clin. Res. Hepatol. Gastroenterol.">
        <title>Screening for rare variants in the PNPLA3 gene in obese liver biopsy patients.</title>
        <authorList>
            <person name="Zegers D."/>
            <person name="Verrijken A."/>
            <person name="Francque S."/>
            <person name="de Freitas F."/>
            <person name="Beckers S."/>
            <person name="Aerts E."/>
            <person name="Ruppert M."/>
            <person name="Hubens G."/>
            <person name="Michielsen P."/>
            <person name="Van Hul W."/>
            <person name="Van Gaal L.F."/>
        </authorList>
    </citation>
    <scope>VARIANTS NAFLD1 THR-76; VAL-104 AND MET-200</scope>
</reference>
<protein>
    <recommendedName>
        <fullName evidence="22">1-acylglycerol-3-phosphate O-acyltransferase PNPLA3</fullName>
        <ecNumber evidence="13 14">2.3.1.51</ecNumber>
    </recommendedName>
    <alternativeName>
        <fullName evidence="18">Acylglycerol transacylase</fullName>
    </alternativeName>
    <alternativeName>
        <fullName evidence="20">Adiponutrin</fullName>
        <shortName evidence="20">ADPN</shortName>
    </alternativeName>
    <alternativeName>
        <fullName evidence="18">Calcium-independent phospholipase A2-epsilon</fullName>
        <shortName evidence="18">iPLA2-epsilon</shortName>
        <ecNumber evidence="5">3.1.1.4</ecNumber>
    </alternativeName>
    <alternativeName>
        <fullName evidence="20">Lysophosphatidic acid acyltransferase</fullName>
    </alternativeName>
    <alternativeName>
        <fullName evidence="19">Patatin-like phospholipase domain-containing protein 3</fullName>
        <ecNumber evidence="5 12 13 14">3.1.1.3</ecNumber>
    </alternativeName>
</protein>
<accession>Q9NST1</accession>
<accession>B0QYI0</accession>
<accession>B2RCL3</accession>
<accession>B3KW00</accession>
<accession>Q6P1A1</accession>
<accession>Q96CB4</accession>
<evidence type="ECO:0000255" key="1"/>
<evidence type="ECO:0000255" key="2">
    <source>
        <dbReference type="PROSITE-ProRule" id="PRU01161"/>
    </source>
</evidence>
<evidence type="ECO:0000269" key="3">
    <source>
    </source>
</evidence>
<evidence type="ECO:0000269" key="4">
    <source>
    </source>
</evidence>
<evidence type="ECO:0000269" key="5">
    <source>
    </source>
</evidence>
<evidence type="ECO:0000269" key="6">
    <source>
    </source>
</evidence>
<evidence type="ECO:0000269" key="7">
    <source>
    </source>
</evidence>
<evidence type="ECO:0000269" key="8">
    <source>
    </source>
</evidence>
<evidence type="ECO:0000269" key="9">
    <source>
    </source>
</evidence>
<evidence type="ECO:0000269" key="10">
    <source>
    </source>
</evidence>
<evidence type="ECO:0000269" key="11">
    <source>
    </source>
</evidence>
<evidence type="ECO:0000269" key="12">
    <source>
    </source>
</evidence>
<evidence type="ECO:0000269" key="13">
    <source>
    </source>
</evidence>
<evidence type="ECO:0000269" key="14">
    <source>
    </source>
</evidence>
<evidence type="ECO:0000269" key="15">
    <source>
    </source>
</evidence>
<evidence type="ECO:0000269" key="16">
    <source ref="5"/>
</evidence>
<evidence type="ECO:0000303" key="17">
    <source>
    </source>
</evidence>
<evidence type="ECO:0000303" key="18">
    <source>
    </source>
</evidence>
<evidence type="ECO:0000303" key="19">
    <source>
    </source>
</evidence>
<evidence type="ECO:0000303" key="20">
    <source>
    </source>
</evidence>
<evidence type="ECO:0000305" key="21">
    <source>
    </source>
</evidence>
<evidence type="ECO:0000305" key="22">
    <source>
    </source>
</evidence>
<evidence type="ECO:0000312" key="23">
    <source>
        <dbReference type="HGNC" id="HGNC:18590"/>
    </source>
</evidence>
<gene>
    <name evidence="19 20 23" type="primary">PNPLA3</name>
    <name evidence="20" type="synonym">ADPN</name>
    <name type="synonym">C22orf20</name>
</gene>